<proteinExistence type="evidence at transcript level"/>
<evidence type="ECO:0000250" key="1"/>
<evidence type="ECO:0000250" key="2">
    <source>
        <dbReference type="UniProtKB" id="P01589"/>
    </source>
</evidence>
<evidence type="ECO:0000255" key="3"/>
<evidence type="ECO:0000255" key="4">
    <source>
        <dbReference type="PROSITE-ProRule" id="PRU00302"/>
    </source>
</evidence>
<evidence type="ECO:0000256" key="5">
    <source>
        <dbReference type="SAM" id="MobiDB-lite"/>
    </source>
</evidence>
<keyword id="KW-1015">Disulfide bond</keyword>
<keyword id="KW-0325">Glycoprotein</keyword>
<keyword id="KW-0391">Immunity</keyword>
<keyword id="KW-0472">Membrane</keyword>
<keyword id="KW-0675">Receptor</keyword>
<keyword id="KW-1185">Reference proteome</keyword>
<keyword id="KW-0677">Repeat</keyword>
<keyword id="KW-0732">Signal</keyword>
<keyword id="KW-0768">Sushi</keyword>
<keyword id="KW-0812">Transmembrane</keyword>
<keyword id="KW-1133">Transmembrane helix</keyword>
<name>IL2RA_CANLF</name>
<protein>
    <recommendedName>
        <fullName>Interleukin-2 receptor subunit alpha</fullName>
        <shortName>IL-2 receptor subunit alpha</shortName>
        <shortName>IL-2-RA</shortName>
        <shortName>IL-2R subunit alpha</shortName>
        <shortName>IL2-RA</shortName>
    </recommendedName>
    <alternativeName>
        <fullName>TAC antigen</fullName>
    </alternativeName>
    <alternativeName>
        <fullName>p55</fullName>
    </alternativeName>
    <cdAntigenName>CD25</cdAntigenName>
</protein>
<sequence>MEPCLLMWGILTFITVSGYTTDLCDDDPPNLKHATFKALTYKTGTVLNCDCERGFRRISSYMHCTGNSSHASWENKCRCKSVSPENRKGKVTTKPEEQKGENPTEMQSQTPPMDEVDLVGHCREPPPWEHENSKRIYHFVVGQTLHYQCMQGFTALHRGPAKSICKTIFGKTRWTQPPLKCISESQFPDDEELQASTDAPAGRDTSSPFITTSTPDFHKHTEVATTMESFIFTTEYQIAVASCVLLLISIVLLSGLTWQRRRRKSRTI</sequence>
<accession>O62802</accession>
<dbReference type="EMBL" id="AF056491">
    <property type="protein sequence ID" value="AAC13560.1"/>
    <property type="molecule type" value="mRNA"/>
</dbReference>
<dbReference type="SMR" id="O62802"/>
<dbReference type="FunCoup" id="O62802">
    <property type="interactions" value="12"/>
</dbReference>
<dbReference type="STRING" id="9615.ENSCAFP00000007785"/>
<dbReference type="GlyCosmos" id="O62802">
    <property type="glycosylation" value="1 site, No reported glycans"/>
</dbReference>
<dbReference type="PaxDb" id="9612-ENSCAFP00000007785"/>
<dbReference type="eggNOG" id="ENOG502SUAG">
    <property type="taxonomic scope" value="Eukaryota"/>
</dbReference>
<dbReference type="InParanoid" id="O62802"/>
<dbReference type="OrthoDB" id="9833060at2759"/>
<dbReference type="Proteomes" id="UP000002254">
    <property type="component" value="Unplaced"/>
</dbReference>
<dbReference type="Proteomes" id="UP000694429">
    <property type="component" value="Unplaced"/>
</dbReference>
<dbReference type="Proteomes" id="UP000694542">
    <property type="component" value="Unplaced"/>
</dbReference>
<dbReference type="Proteomes" id="UP000805418">
    <property type="component" value="Unplaced"/>
</dbReference>
<dbReference type="GO" id="GO:0016020">
    <property type="term" value="C:membrane"/>
    <property type="evidence" value="ECO:0007669"/>
    <property type="project" value="UniProtKB-SubCell"/>
</dbReference>
<dbReference type="GO" id="GO:0019976">
    <property type="term" value="F:interleukin-2 binding"/>
    <property type="evidence" value="ECO:0000318"/>
    <property type="project" value="GO_Central"/>
</dbReference>
<dbReference type="GO" id="GO:0004911">
    <property type="term" value="F:interleukin-2 receptor activity"/>
    <property type="evidence" value="ECO:0007669"/>
    <property type="project" value="InterPro"/>
</dbReference>
<dbReference type="GO" id="GO:0002376">
    <property type="term" value="P:immune system process"/>
    <property type="evidence" value="ECO:0007669"/>
    <property type="project" value="UniProtKB-KW"/>
</dbReference>
<dbReference type="GO" id="GO:0006954">
    <property type="term" value="P:inflammatory response"/>
    <property type="evidence" value="ECO:0000318"/>
    <property type="project" value="GO_Central"/>
</dbReference>
<dbReference type="CDD" id="cd00033">
    <property type="entry name" value="CCP"/>
    <property type="match status" value="1"/>
</dbReference>
<dbReference type="FunFam" id="2.20.28.230:FF:000002">
    <property type="entry name" value="Interleukin-2 receptor subunit alpha"/>
    <property type="match status" value="1"/>
</dbReference>
<dbReference type="Gene3D" id="2.20.28.230">
    <property type="match status" value="3"/>
</dbReference>
<dbReference type="InterPro" id="IPR015486">
    <property type="entry name" value="IL-2_rcpt_alpha"/>
</dbReference>
<dbReference type="InterPro" id="IPR035976">
    <property type="entry name" value="Sushi/SCR/CCP_sf"/>
</dbReference>
<dbReference type="InterPro" id="IPR000436">
    <property type="entry name" value="Sushi_SCR_CCP_dom"/>
</dbReference>
<dbReference type="PANTHER" id="PTHR10573">
    <property type="entry name" value="INTERLEUKIN-2 RECEPTOR ALPHA CHAIN"/>
    <property type="match status" value="1"/>
</dbReference>
<dbReference type="PANTHER" id="PTHR10573:SF0">
    <property type="entry name" value="INTERLEUKIN-2 RECEPTOR SUBUNIT ALPHA"/>
    <property type="match status" value="1"/>
</dbReference>
<dbReference type="Pfam" id="PF00084">
    <property type="entry name" value="Sushi"/>
    <property type="match status" value="2"/>
</dbReference>
<dbReference type="SMART" id="SM00032">
    <property type="entry name" value="CCP"/>
    <property type="match status" value="2"/>
</dbReference>
<dbReference type="SUPFAM" id="SSF57535">
    <property type="entry name" value="Complement control module/SCR domain"/>
    <property type="match status" value="2"/>
</dbReference>
<dbReference type="PROSITE" id="PS50923">
    <property type="entry name" value="SUSHI"/>
    <property type="match status" value="2"/>
</dbReference>
<reference key="1">
    <citation type="submission" date="1998-03" db="EMBL/GenBank/DDBJ databases">
        <title>Cloning of the canine IL-2 receptor alpha subunit.</title>
        <authorList>
            <person name="Dickerson E.B."/>
            <person name="Padilla M.L."/>
            <person name="Helfand S.C."/>
        </authorList>
    </citation>
    <scope>NUCLEOTIDE SEQUENCE [MRNA]</scope>
</reference>
<gene>
    <name type="primary">IL2RA</name>
</gene>
<feature type="signal peptide" evidence="1">
    <location>
        <begin position="1"/>
        <end position="21"/>
    </location>
</feature>
<feature type="chain" id="PRO_0000011022" description="Interleukin-2 receptor subunit alpha">
    <location>
        <begin position="22"/>
        <end position="268"/>
    </location>
</feature>
<feature type="topological domain" description="Extracellular" evidence="3">
    <location>
        <begin position="22"/>
        <end position="237"/>
    </location>
</feature>
<feature type="transmembrane region" description="Helical" evidence="3">
    <location>
        <begin position="238"/>
        <end position="258"/>
    </location>
</feature>
<feature type="topological domain" description="Cytoplasmic" evidence="3">
    <location>
        <begin position="259"/>
        <end position="268"/>
    </location>
</feature>
<feature type="domain" description="Sushi 1" evidence="4">
    <location>
        <begin position="22"/>
        <end position="81"/>
    </location>
</feature>
<feature type="domain" description="Sushi 2" evidence="4">
    <location>
        <begin position="120"/>
        <end position="183"/>
    </location>
</feature>
<feature type="region of interest" description="Disordered" evidence="5">
    <location>
        <begin position="83"/>
        <end position="112"/>
    </location>
</feature>
<feature type="region of interest" description="Disordered" evidence="5">
    <location>
        <begin position="186"/>
        <end position="213"/>
    </location>
</feature>
<feature type="compositionally biased region" description="Basic and acidic residues" evidence="5">
    <location>
        <begin position="85"/>
        <end position="102"/>
    </location>
</feature>
<feature type="compositionally biased region" description="Polar residues" evidence="5">
    <location>
        <begin position="204"/>
        <end position="213"/>
    </location>
</feature>
<feature type="glycosylation site" description="N-linked (GlcNAc...) asparagine" evidence="3">
    <location>
        <position position="67"/>
    </location>
</feature>
<feature type="disulfide bond" evidence="4">
    <location>
        <begin position="24"/>
        <end position="64"/>
    </location>
</feature>
<feature type="disulfide bond" evidence="4">
    <location>
        <begin position="49"/>
        <end position="77"/>
    </location>
</feature>
<feature type="disulfide bond" evidence="4">
    <location>
        <begin position="51"/>
        <end position="79"/>
    </location>
</feature>
<feature type="disulfide bond" evidence="4">
    <location>
        <begin position="122"/>
        <end position="165"/>
    </location>
</feature>
<feature type="disulfide bond" evidence="4">
    <location>
        <begin position="149"/>
        <end position="181"/>
    </location>
</feature>
<comment type="function">
    <text evidence="2">Receptor for interleukin-2. The receptor is involved in the regulation of immune tolerance by controlling regulatory T cells (TREGs) activity. TREGs suppress the activation and expansion of autoreactive T-cells.</text>
</comment>
<comment type="subunit">
    <text evidence="1">Non-covalent dimer of an alpha and a beta subunit. IL2R exists in 3 different forms: a high affinity dimer, an intermediate affinity monomer (beta subunit), and a low affinity monomer (alpha subunit). The high and intermediate affinity forms also associate with a gamma subunit (By similarity).</text>
</comment>
<comment type="subcellular location">
    <subcellularLocation>
        <location>Membrane</location>
        <topology>Single-pass type I membrane protein</topology>
    </subcellularLocation>
</comment>
<organism>
    <name type="scientific">Canis lupus familiaris</name>
    <name type="common">Dog</name>
    <name type="synonym">Canis familiaris</name>
    <dbReference type="NCBI Taxonomy" id="9615"/>
    <lineage>
        <taxon>Eukaryota</taxon>
        <taxon>Metazoa</taxon>
        <taxon>Chordata</taxon>
        <taxon>Craniata</taxon>
        <taxon>Vertebrata</taxon>
        <taxon>Euteleostomi</taxon>
        <taxon>Mammalia</taxon>
        <taxon>Eutheria</taxon>
        <taxon>Laurasiatheria</taxon>
        <taxon>Carnivora</taxon>
        <taxon>Caniformia</taxon>
        <taxon>Canidae</taxon>
        <taxon>Canis</taxon>
    </lineage>
</organism>